<keyword id="KW-0349">Heme</keyword>
<keyword id="KW-0376">Hydrogen peroxide</keyword>
<keyword id="KW-0408">Iron</keyword>
<keyword id="KW-0479">Metal-binding</keyword>
<keyword id="KW-0560">Oxidoreductase</keyword>
<keyword id="KW-0575">Peroxidase</keyword>
<feature type="chain" id="PRO_0000354772" description="Catalase-peroxidase">
    <location>
        <begin position="1"/>
        <end position="726"/>
    </location>
</feature>
<feature type="region of interest" description="Disordered" evidence="2">
    <location>
        <begin position="1"/>
        <end position="34"/>
    </location>
</feature>
<feature type="compositionally biased region" description="Polar residues" evidence="2">
    <location>
        <begin position="1"/>
        <end position="13"/>
    </location>
</feature>
<feature type="active site" description="Proton acceptor" evidence="1">
    <location>
        <position position="106"/>
    </location>
</feature>
<feature type="binding site" description="axial binding residue" evidence="1">
    <location>
        <position position="267"/>
    </location>
    <ligand>
        <name>heme b</name>
        <dbReference type="ChEBI" id="CHEBI:60344"/>
    </ligand>
    <ligandPart>
        <name>Fe</name>
        <dbReference type="ChEBI" id="CHEBI:18248"/>
    </ligandPart>
</feature>
<feature type="site" description="Transition state stabilizer" evidence="1">
    <location>
        <position position="102"/>
    </location>
</feature>
<feature type="cross-link" description="Tryptophyl-tyrosyl-methioninium (Trp-Tyr) (with M-252)" evidence="1">
    <location>
        <begin position="105"/>
        <end position="226"/>
    </location>
</feature>
<feature type="cross-link" description="Tryptophyl-tyrosyl-methioninium (Tyr-Met) (with W-105)" evidence="1">
    <location>
        <begin position="226"/>
        <end position="252"/>
    </location>
</feature>
<name>KATG_ENT38</name>
<evidence type="ECO:0000255" key="1">
    <source>
        <dbReference type="HAMAP-Rule" id="MF_01961"/>
    </source>
</evidence>
<evidence type="ECO:0000256" key="2">
    <source>
        <dbReference type="SAM" id="MobiDB-lite"/>
    </source>
</evidence>
<protein>
    <recommendedName>
        <fullName evidence="1">Catalase-peroxidase</fullName>
        <shortName evidence="1">CP</shortName>
        <ecNumber evidence="1">1.11.1.21</ecNumber>
    </recommendedName>
    <alternativeName>
        <fullName evidence="1">Peroxidase/catalase</fullName>
    </alternativeName>
</protein>
<dbReference type="EC" id="1.11.1.21" evidence="1"/>
<dbReference type="EMBL" id="CP000653">
    <property type="protein sequence ID" value="ABP62687.1"/>
    <property type="molecule type" value="Genomic_DNA"/>
</dbReference>
<dbReference type="RefSeq" id="WP_015960991.1">
    <property type="nucleotide sequence ID" value="NC_009436.1"/>
</dbReference>
<dbReference type="SMR" id="A4WG57"/>
<dbReference type="STRING" id="399742.Ent638_4032"/>
<dbReference type="KEGG" id="ent:Ent638_4032"/>
<dbReference type="eggNOG" id="COG0376">
    <property type="taxonomic scope" value="Bacteria"/>
</dbReference>
<dbReference type="HOGENOM" id="CLU_025424_2_0_6"/>
<dbReference type="OrthoDB" id="9759743at2"/>
<dbReference type="Proteomes" id="UP000000230">
    <property type="component" value="Chromosome"/>
</dbReference>
<dbReference type="GO" id="GO:0005829">
    <property type="term" value="C:cytosol"/>
    <property type="evidence" value="ECO:0007669"/>
    <property type="project" value="TreeGrafter"/>
</dbReference>
<dbReference type="GO" id="GO:0004096">
    <property type="term" value="F:catalase activity"/>
    <property type="evidence" value="ECO:0007669"/>
    <property type="project" value="UniProtKB-UniRule"/>
</dbReference>
<dbReference type="GO" id="GO:0020037">
    <property type="term" value="F:heme binding"/>
    <property type="evidence" value="ECO:0007669"/>
    <property type="project" value="InterPro"/>
</dbReference>
<dbReference type="GO" id="GO:0046872">
    <property type="term" value="F:metal ion binding"/>
    <property type="evidence" value="ECO:0007669"/>
    <property type="project" value="UniProtKB-KW"/>
</dbReference>
<dbReference type="GO" id="GO:0070301">
    <property type="term" value="P:cellular response to hydrogen peroxide"/>
    <property type="evidence" value="ECO:0007669"/>
    <property type="project" value="TreeGrafter"/>
</dbReference>
<dbReference type="GO" id="GO:0042744">
    <property type="term" value="P:hydrogen peroxide catabolic process"/>
    <property type="evidence" value="ECO:0007669"/>
    <property type="project" value="UniProtKB-KW"/>
</dbReference>
<dbReference type="CDD" id="cd08200">
    <property type="entry name" value="catalase_peroxidase_2"/>
    <property type="match status" value="1"/>
</dbReference>
<dbReference type="FunFam" id="1.10.420.10:FF:000002">
    <property type="entry name" value="Catalase-peroxidase"/>
    <property type="match status" value="1"/>
</dbReference>
<dbReference type="FunFam" id="1.10.420.10:FF:000004">
    <property type="entry name" value="Catalase-peroxidase"/>
    <property type="match status" value="1"/>
</dbReference>
<dbReference type="FunFam" id="1.10.520.10:FF:000002">
    <property type="entry name" value="Catalase-peroxidase"/>
    <property type="match status" value="1"/>
</dbReference>
<dbReference type="Gene3D" id="1.10.520.10">
    <property type="match status" value="2"/>
</dbReference>
<dbReference type="Gene3D" id="1.10.420.10">
    <property type="entry name" value="Peroxidase, domain 2"/>
    <property type="match status" value="2"/>
</dbReference>
<dbReference type="HAMAP" id="MF_01961">
    <property type="entry name" value="Catal_peroxid"/>
    <property type="match status" value="1"/>
</dbReference>
<dbReference type="InterPro" id="IPR000763">
    <property type="entry name" value="Catalase_peroxidase"/>
</dbReference>
<dbReference type="InterPro" id="IPR002016">
    <property type="entry name" value="Haem_peroxidase"/>
</dbReference>
<dbReference type="InterPro" id="IPR010255">
    <property type="entry name" value="Haem_peroxidase_sf"/>
</dbReference>
<dbReference type="InterPro" id="IPR019794">
    <property type="entry name" value="Peroxidases_AS"/>
</dbReference>
<dbReference type="InterPro" id="IPR019793">
    <property type="entry name" value="Peroxidases_heam-ligand_BS"/>
</dbReference>
<dbReference type="NCBIfam" id="TIGR00198">
    <property type="entry name" value="cat_per_HPI"/>
    <property type="match status" value="1"/>
</dbReference>
<dbReference type="NCBIfam" id="NF011635">
    <property type="entry name" value="PRK15061.1"/>
    <property type="match status" value="1"/>
</dbReference>
<dbReference type="PANTHER" id="PTHR30555:SF0">
    <property type="entry name" value="CATALASE-PEROXIDASE"/>
    <property type="match status" value="1"/>
</dbReference>
<dbReference type="PANTHER" id="PTHR30555">
    <property type="entry name" value="HYDROPEROXIDASE I, BIFUNCTIONAL CATALASE-PEROXIDASE"/>
    <property type="match status" value="1"/>
</dbReference>
<dbReference type="Pfam" id="PF00141">
    <property type="entry name" value="peroxidase"/>
    <property type="match status" value="2"/>
</dbReference>
<dbReference type="PRINTS" id="PR00460">
    <property type="entry name" value="BPEROXIDASE"/>
</dbReference>
<dbReference type="PRINTS" id="PR00458">
    <property type="entry name" value="PEROXIDASE"/>
</dbReference>
<dbReference type="SUPFAM" id="SSF48113">
    <property type="entry name" value="Heme-dependent peroxidases"/>
    <property type="match status" value="2"/>
</dbReference>
<dbReference type="PROSITE" id="PS00435">
    <property type="entry name" value="PEROXIDASE_1"/>
    <property type="match status" value="1"/>
</dbReference>
<dbReference type="PROSITE" id="PS00436">
    <property type="entry name" value="PEROXIDASE_2"/>
    <property type="match status" value="1"/>
</dbReference>
<dbReference type="PROSITE" id="PS50873">
    <property type="entry name" value="PEROXIDASE_4"/>
    <property type="match status" value="1"/>
</dbReference>
<proteinExistence type="inferred from homology"/>
<sequence>MSMSEETNNSLSSGKCPFHHGGSDQSAGEGTGSRDWWPKQLRVELLNQHSNRSNPLGEDFDYRKEFSKLDYSALKGDIKALLTDSQSWWPADWGSYVGLFIRMAWHGAGTYRSVDGRGGAGRGQQRFAPLNAWPDNVSLDKARRLLWPIKQKYGQKISWADLYILAGNVALENSGFRTFGFGAGREDVWEPDMDVNWGDEKAWLTHRDPESLAKRPLAATEMGLIYVNPEGPNASGEPLSAAAAIRATFGNMGMNDEETVALIAGGHTLGKTHGAAAATHVGVDPEGSLIESQGLGWTSTHGTGVGADAITSGLEVVWSQTPTQWSNYFFENLFKYEWVQTRSPAGAIQFEAVDAPEIIPDPFDPSKKRKPTMLVTDLTLRFDPEFEKISRRFLNDPQAFNEAFARAWYKLTHRDMGPKARYIGPEVPKEDLIWQDPLPQAVFNPSQEDIASLKAEIVASGLSVSELVSVAWASASTFRGGDKRGGANGARLALAPQRDWDVNAAAVRALPTLEAIQRTTNKASLADIIVLAGVVGVEQAAKAAGVYITVPFTPGRVDARQDQTDIEMFNLLEPIADGFRNYRAQVDVSTTESLLIDKAQQLTLTAPELTALVGGMRVLGANFDGSQNGVFTDRVGVLTTDFFVNLLDMGTQWKATDESNELFAGSDRASGEVKYTATRADLVFGSNAVLRALAEVYASQDASEKFVKDFVAAWTKVMNLDRFDVK</sequence>
<gene>
    <name evidence="1" type="primary">katG</name>
    <name type="ordered locus">Ent638_4032</name>
</gene>
<organism>
    <name type="scientific">Enterobacter sp. (strain 638)</name>
    <dbReference type="NCBI Taxonomy" id="399742"/>
    <lineage>
        <taxon>Bacteria</taxon>
        <taxon>Pseudomonadati</taxon>
        <taxon>Pseudomonadota</taxon>
        <taxon>Gammaproteobacteria</taxon>
        <taxon>Enterobacterales</taxon>
        <taxon>Enterobacteriaceae</taxon>
        <taxon>Enterobacter</taxon>
    </lineage>
</organism>
<accession>A4WG57</accession>
<comment type="function">
    <text evidence="1">Bifunctional enzyme with both catalase and broad-spectrum peroxidase activity.</text>
</comment>
<comment type="catalytic activity">
    <reaction evidence="1">
        <text>H2O2 + AH2 = A + 2 H2O</text>
        <dbReference type="Rhea" id="RHEA:30275"/>
        <dbReference type="ChEBI" id="CHEBI:13193"/>
        <dbReference type="ChEBI" id="CHEBI:15377"/>
        <dbReference type="ChEBI" id="CHEBI:16240"/>
        <dbReference type="ChEBI" id="CHEBI:17499"/>
        <dbReference type="EC" id="1.11.1.21"/>
    </reaction>
</comment>
<comment type="catalytic activity">
    <reaction evidence="1">
        <text>2 H2O2 = O2 + 2 H2O</text>
        <dbReference type="Rhea" id="RHEA:20309"/>
        <dbReference type="ChEBI" id="CHEBI:15377"/>
        <dbReference type="ChEBI" id="CHEBI:15379"/>
        <dbReference type="ChEBI" id="CHEBI:16240"/>
        <dbReference type="EC" id="1.11.1.21"/>
    </reaction>
</comment>
<comment type="cofactor">
    <cofactor evidence="1">
        <name>heme b</name>
        <dbReference type="ChEBI" id="CHEBI:60344"/>
    </cofactor>
    <text evidence="1">Binds 1 heme b (iron(II)-protoporphyrin IX) group per dimer.</text>
</comment>
<comment type="subunit">
    <text evidence="1">Homodimer or homotetramer.</text>
</comment>
<comment type="PTM">
    <text evidence="1">Formation of the three residue Trp-Tyr-Met cross-link is important for the catalase, but not the peroxidase activity of the enzyme.</text>
</comment>
<comment type="similarity">
    <text evidence="1">Belongs to the peroxidase family. Peroxidase/catalase subfamily.</text>
</comment>
<reference key="1">
    <citation type="journal article" date="2010" name="PLoS Genet.">
        <title>Genome sequence of the plant growth promoting endophytic bacterium Enterobacter sp. 638.</title>
        <authorList>
            <person name="Taghavi S."/>
            <person name="van der Lelie D."/>
            <person name="Hoffman A."/>
            <person name="Zhang Y.B."/>
            <person name="Walla M.D."/>
            <person name="Vangronsveld J."/>
            <person name="Newman L."/>
            <person name="Monchy S."/>
        </authorList>
    </citation>
    <scope>NUCLEOTIDE SEQUENCE [LARGE SCALE GENOMIC DNA]</scope>
    <source>
        <strain>638</strain>
    </source>
</reference>